<organism>
    <name type="scientific">Aspergillus fumigatus (strain CBS 144.89 / FGSC A1163 / CEA10)</name>
    <name type="common">Neosartorya fumigata</name>
    <dbReference type="NCBI Taxonomy" id="451804"/>
    <lineage>
        <taxon>Eukaryota</taxon>
        <taxon>Fungi</taxon>
        <taxon>Dikarya</taxon>
        <taxon>Ascomycota</taxon>
        <taxon>Pezizomycotina</taxon>
        <taxon>Eurotiomycetes</taxon>
        <taxon>Eurotiomycetidae</taxon>
        <taxon>Eurotiales</taxon>
        <taxon>Aspergillaceae</taxon>
        <taxon>Aspergillus</taxon>
        <taxon>Aspergillus subgen. Fumigati</taxon>
    </lineage>
</organism>
<comment type="function">
    <text evidence="1">Component of the regulatory network controlling carbon source utilization through ubiquitination and deubiquitination involving creA, creB, creC, creD and acrB. Required to prevent the proteolysis of the CreB deubiquitinating enzyme in the absence of carbon catabolite repression. CreB deubiquitinating enzyme stabilized in a complex with the CreC leads to the expression of genes such as those in the proline and quinate pathways (By similarity).</text>
</comment>
<comment type="subunit">
    <text evidence="1">Interacts with creB.</text>
</comment>
<comment type="similarity">
    <text evidence="3">Belongs to the WD repeat creC family.</text>
</comment>
<feature type="chain" id="PRO_0000395687" description="Probable catabolite repression protein creC">
    <location>
        <begin position="1"/>
        <end position="566"/>
    </location>
</feature>
<feature type="repeat" description="WD 1">
    <location>
        <begin position="225"/>
        <end position="265"/>
    </location>
</feature>
<feature type="repeat" description="WD 2">
    <location>
        <begin position="305"/>
        <end position="340"/>
    </location>
</feature>
<feature type="repeat" description="WD 3">
    <location>
        <begin position="341"/>
        <end position="379"/>
    </location>
</feature>
<feature type="repeat" description="WD 4">
    <location>
        <begin position="382"/>
        <end position="426"/>
    </location>
</feature>
<feature type="repeat" description="WD 5">
    <location>
        <begin position="498"/>
        <end position="535"/>
    </location>
</feature>
<feature type="region of interest" description="Disordered" evidence="2">
    <location>
        <begin position="433"/>
        <end position="470"/>
    </location>
</feature>
<feature type="region of interest" description="Disordered" evidence="2">
    <location>
        <begin position="533"/>
        <end position="566"/>
    </location>
</feature>
<feature type="compositionally biased region" description="Polar residues" evidence="2">
    <location>
        <begin position="433"/>
        <end position="447"/>
    </location>
</feature>
<feature type="compositionally biased region" description="Low complexity" evidence="2">
    <location>
        <begin position="540"/>
        <end position="566"/>
    </location>
</feature>
<name>CREC_ASPFC</name>
<accession>B0Y7H6</accession>
<keyword id="KW-0677">Repeat</keyword>
<keyword id="KW-0804">Transcription</keyword>
<keyword id="KW-0805">Transcription regulation</keyword>
<keyword id="KW-0833">Ubl conjugation pathway</keyword>
<keyword id="KW-0853">WD repeat</keyword>
<reference key="1">
    <citation type="journal article" date="2008" name="PLoS Genet.">
        <title>Genomic islands in the pathogenic filamentous fungus Aspergillus fumigatus.</title>
        <authorList>
            <person name="Fedorova N.D."/>
            <person name="Khaldi N."/>
            <person name="Joardar V.S."/>
            <person name="Maiti R."/>
            <person name="Amedeo P."/>
            <person name="Anderson M.J."/>
            <person name="Crabtree J."/>
            <person name="Silva J.C."/>
            <person name="Badger J.H."/>
            <person name="Albarraq A."/>
            <person name="Angiuoli S."/>
            <person name="Bussey H."/>
            <person name="Bowyer P."/>
            <person name="Cotty P.J."/>
            <person name="Dyer P.S."/>
            <person name="Egan A."/>
            <person name="Galens K."/>
            <person name="Fraser-Liggett C.M."/>
            <person name="Haas B.J."/>
            <person name="Inman J.M."/>
            <person name="Kent R."/>
            <person name="Lemieux S."/>
            <person name="Malavazi I."/>
            <person name="Orvis J."/>
            <person name="Roemer T."/>
            <person name="Ronning C.M."/>
            <person name="Sundaram J.P."/>
            <person name="Sutton G."/>
            <person name="Turner G."/>
            <person name="Venter J.C."/>
            <person name="White O.R."/>
            <person name="Whitty B.R."/>
            <person name="Youngman P."/>
            <person name="Wolfe K.H."/>
            <person name="Goldman G.H."/>
            <person name="Wortman J.R."/>
            <person name="Jiang B."/>
            <person name="Denning D.W."/>
            <person name="Nierman W.C."/>
        </authorList>
    </citation>
    <scope>NUCLEOTIDE SEQUENCE [LARGE SCALE GENOMIC DNA]</scope>
    <source>
        <strain>CBS 144.89 / FGSC A1163 / CEA10</strain>
    </source>
</reference>
<protein>
    <recommendedName>
        <fullName>Probable catabolite repression protein creC</fullName>
    </recommendedName>
</protein>
<dbReference type="EMBL" id="DS499599">
    <property type="protein sequence ID" value="EDP49357.1"/>
    <property type="molecule type" value="Genomic_DNA"/>
</dbReference>
<dbReference type="SMR" id="B0Y7H6"/>
<dbReference type="OrthoDB" id="61767at5052"/>
<dbReference type="PhylomeDB" id="B0Y7H6"/>
<dbReference type="Proteomes" id="UP000001699">
    <property type="component" value="Unassembled WGS sequence"/>
</dbReference>
<dbReference type="GO" id="GO:0032153">
    <property type="term" value="C:cell division site"/>
    <property type="evidence" value="ECO:0007669"/>
    <property type="project" value="TreeGrafter"/>
</dbReference>
<dbReference type="GO" id="GO:0051286">
    <property type="term" value="C:cell tip"/>
    <property type="evidence" value="ECO:0007669"/>
    <property type="project" value="TreeGrafter"/>
</dbReference>
<dbReference type="GO" id="GO:0005634">
    <property type="term" value="C:nucleus"/>
    <property type="evidence" value="ECO:0007669"/>
    <property type="project" value="TreeGrafter"/>
</dbReference>
<dbReference type="GO" id="GO:0045013">
    <property type="term" value="P:carbon catabolite repression of transcription"/>
    <property type="evidence" value="ECO:0000250"/>
    <property type="project" value="UniProtKB"/>
</dbReference>
<dbReference type="FunFam" id="2.130.10.10:FF:000531">
    <property type="entry name" value="Probable catabolite repression protein creC"/>
    <property type="match status" value="1"/>
</dbReference>
<dbReference type="Gene3D" id="2.130.10.10">
    <property type="entry name" value="YVTN repeat-like/Quinoprotein amine dehydrogenase"/>
    <property type="match status" value="1"/>
</dbReference>
<dbReference type="InterPro" id="IPR015943">
    <property type="entry name" value="WD40/YVTN_repeat-like_dom_sf"/>
</dbReference>
<dbReference type="InterPro" id="IPR036322">
    <property type="entry name" value="WD40_repeat_dom_sf"/>
</dbReference>
<dbReference type="InterPro" id="IPR001680">
    <property type="entry name" value="WD40_rpt"/>
</dbReference>
<dbReference type="InterPro" id="IPR051362">
    <property type="entry name" value="WD_repeat_creC_regulators"/>
</dbReference>
<dbReference type="PANTHER" id="PTHR14107:SF16">
    <property type="entry name" value="AT02583P"/>
    <property type="match status" value="1"/>
</dbReference>
<dbReference type="PANTHER" id="PTHR14107">
    <property type="entry name" value="WD REPEAT PROTEIN"/>
    <property type="match status" value="1"/>
</dbReference>
<dbReference type="Pfam" id="PF00400">
    <property type="entry name" value="WD40"/>
    <property type="match status" value="2"/>
</dbReference>
<dbReference type="SMART" id="SM00320">
    <property type="entry name" value="WD40"/>
    <property type="match status" value="5"/>
</dbReference>
<dbReference type="SUPFAM" id="SSF50978">
    <property type="entry name" value="WD40 repeat-like"/>
    <property type="match status" value="1"/>
</dbReference>
<dbReference type="PROSITE" id="PS50082">
    <property type="entry name" value="WD_REPEATS_2"/>
    <property type="match status" value="1"/>
</dbReference>
<dbReference type="PROSITE" id="PS50294">
    <property type="entry name" value="WD_REPEATS_REGION"/>
    <property type="match status" value="1"/>
</dbReference>
<gene>
    <name type="primary">creC</name>
    <name type="ORF">AFUB_073840</name>
</gene>
<proteinExistence type="inferred from homology"/>
<sequence>MAVPVVETNNILSHPEGGCPLQVGEGTYELKDDLHLATPPPHPSEAPIINPNPLATVPTPPTSGVKVSLVCVSPRSRTPSFISKQIVTAPPFGDGNPALVPAPVKDGLKRRKPKNNIIKSSSSFVSRVITHEVATKRLSERSPEGLFAFANINRAFQWLDLSSKQKEDPLAKILFTKAHMLCHDINEVTKSPSHIDVVMGSSAGDIIWYEPISQKYARINKNGVVCNSPVTHIKWIPGSENLFMASHANGQLVVYDKEKEDALFTPEIQDQSAEAVKASSTQPLQVLKSVNSRNQKTNPVALWKLANQRISHFAFSPDQRHLAVVLEDGSLRVMDYLKEDYYGGLICVCWSPDGKYIVTGGQDDLVTIWSFPERKIVARCQGHNSWVSAVAFDPWQCDERTYRFGSVGDDCRLLLWDFSVGMLHRPKVHQTSARQRTSMVAGSSQYGNRHRADSVGNRMRSDSQRTANTYESCDQAVRHPVEPRARTALLPPIMSKVVGTDPICWLGFQEDCIMTSSLEGHIRTWDRPREGINDKYNDQSSSTAVSASAAGSGSISGLAESTMGSL</sequence>
<evidence type="ECO:0000250" key="1"/>
<evidence type="ECO:0000256" key="2">
    <source>
        <dbReference type="SAM" id="MobiDB-lite"/>
    </source>
</evidence>
<evidence type="ECO:0000305" key="3"/>